<keyword id="KW-0687">Ribonucleoprotein</keyword>
<keyword id="KW-0689">Ribosomal protein</keyword>
<keyword id="KW-0694">RNA-binding</keyword>
<keyword id="KW-0699">rRNA-binding</keyword>
<comment type="function">
    <text evidence="1">Located on the platform of the 30S subunit, it bridges several disparate RNA helices of the 16S rRNA. Forms part of the Shine-Dalgarno cleft in the 70S ribosome.</text>
</comment>
<comment type="subunit">
    <text evidence="1">Part of the 30S ribosomal subunit. Interacts with proteins S7 and S18. Binds to IF-3.</text>
</comment>
<comment type="similarity">
    <text evidence="1">Belongs to the universal ribosomal protein uS11 family.</text>
</comment>
<name>RS11_MOOTA</name>
<gene>
    <name evidence="1" type="primary">rpsK</name>
    <name type="ordered locus">Moth_2433</name>
</gene>
<protein>
    <recommendedName>
        <fullName evidence="1">Small ribosomal subunit protein uS11</fullName>
    </recommendedName>
    <alternativeName>
        <fullName evidence="2">30S ribosomal protein S11</fullName>
    </alternativeName>
</protein>
<proteinExistence type="inferred from homology"/>
<organism>
    <name type="scientific">Moorella thermoacetica (strain ATCC 39073 / JCM 9320)</name>
    <dbReference type="NCBI Taxonomy" id="264732"/>
    <lineage>
        <taxon>Bacteria</taxon>
        <taxon>Bacillati</taxon>
        <taxon>Bacillota</taxon>
        <taxon>Clostridia</taxon>
        <taxon>Moorellales</taxon>
        <taxon>Moorellaceae</taxon>
        <taxon>Moorella</taxon>
    </lineage>
</organism>
<evidence type="ECO:0000255" key="1">
    <source>
        <dbReference type="HAMAP-Rule" id="MF_01310"/>
    </source>
</evidence>
<evidence type="ECO:0000305" key="2"/>
<sequence length="130" mass="14067">MPPRKTARPRRRDRKHIESGIAHIKSTFNNTLVTITDKNGNAISWASAGTVGFKGSRKSTPFAAQMAAEAAAKQAMEHGLREVECYVKGPGAGREAAIRSLQAAGLEVSVIKDVTPIPHNGCRPPKRRRV</sequence>
<feature type="chain" id="PRO_0000294793" description="Small ribosomal subunit protein uS11">
    <location>
        <begin position="1"/>
        <end position="130"/>
    </location>
</feature>
<accession>Q2RFS4</accession>
<reference key="1">
    <citation type="journal article" date="2008" name="Environ. Microbiol.">
        <title>The complete genome sequence of Moorella thermoacetica (f. Clostridium thermoaceticum).</title>
        <authorList>
            <person name="Pierce E."/>
            <person name="Xie G."/>
            <person name="Barabote R.D."/>
            <person name="Saunders E."/>
            <person name="Han C.S."/>
            <person name="Detter J.C."/>
            <person name="Richardson P."/>
            <person name="Brettin T.S."/>
            <person name="Das A."/>
            <person name="Ljungdahl L.G."/>
            <person name="Ragsdale S.W."/>
        </authorList>
    </citation>
    <scope>NUCLEOTIDE SEQUENCE [LARGE SCALE GENOMIC DNA]</scope>
    <source>
        <strain>ATCC 39073 / JCM 9320</strain>
    </source>
</reference>
<dbReference type="EMBL" id="CP000232">
    <property type="protein sequence ID" value="ABC20715.1"/>
    <property type="molecule type" value="Genomic_DNA"/>
</dbReference>
<dbReference type="RefSeq" id="YP_431258.1">
    <property type="nucleotide sequence ID" value="NC_007644.1"/>
</dbReference>
<dbReference type="SMR" id="Q2RFS4"/>
<dbReference type="STRING" id="264732.Moth_2433"/>
<dbReference type="EnsemblBacteria" id="ABC20715">
    <property type="protein sequence ID" value="ABC20715"/>
    <property type="gene ID" value="Moth_2433"/>
</dbReference>
<dbReference type="KEGG" id="mta:Moth_2433"/>
<dbReference type="PATRIC" id="fig|264732.11.peg.2651"/>
<dbReference type="eggNOG" id="COG0100">
    <property type="taxonomic scope" value="Bacteria"/>
</dbReference>
<dbReference type="HOGENOM" id="CLU_072439_5_0_9"/>
<dbReference type="OrthoDB" id="9806415at2"/>
<dbReference type="GO" id="GO:1990904">
    <property type="term" value="C:ribonucleoprotein complex"/>
    <property type="evidence" value="ECO:0007669"/>
    <property type="project" value="UniProtKB-KW"/>
</dbReference>
<dbReference type="GO" id="GO:0005840">
    <property type="term" value="C:ribosome"/>
    <property type="evidence" value="ECO:0007669"/>
    <property type="project" value="UniProtKB-KW"/>
</dbReference>
<dbReference type="GO" id="GO:0019843">
    <property type="term" value="F:rRNA binding"/>
    <property type="evidence" value="ECO:0007669"/>
    <property type="project" value="UniProtKB-UniRule"/>
</dbReference>
<dbReference type="GO" id="GO:0003735">
    <property type="term" value="F:structural constituent of ribosome"/>
    <property type="evidence" value="ECO:0007669"/>
    <property type="project" value="InterPro"/>
</dbReference>
<dbReference type="GO" id="GO:0006412">
    <property type="term" value="P:translation"/>
    <property type="evidence" value="ECO:0007669"/>
    <property type="project" value="UniProtKB-UniRule"/>
</dbReference>
<dbReference type="FunFam" id="3.30.420.80:FF:000001">
    <property type="entry name" value="30S ribosomal protein S11"/>
    <property type="match status" value="1"/>
</dbReference>
<dbReference type="Gene3D" id="3.30.420.80">
    <property type="entry name" value="Ribosomal protein S11"/>
    <property type="match status" value="1"/>
</dbReference>
<dbReference type="HAMAP" id="MF_01310">
    <property type="entry name" value="Ribosomal_uS11"/>
    <property type="match status" value="1"/>
</dbReference>
<dbReference type="InterPro" id="IPR001971">
    <property type="entry name" value="Ribosomal_uS11"/>
</dbReference>
<dbReference type="InterPro" id="IPR019981">
    <property type="entry name" value="Ribosomal_uS11_bac-type"/>
</dbReference>
<dbReference type="InterPro" id="IPR018102">
    <property type="entry name" value="Ribosomal_uS11_CS"/>
</dbReference>
<dbReference type="InterPro" id="IPR036967">
    <property type="entry name" value="Ribosomal_uS11_sf"/>
</dbReference>
<dbReference type="NCBIfam" id="NF003698">
    <property type="entry name" value="PRK05309.1"/>
    <property type="match status" value="1"/>
</dbReference>
<dbReference type="NCBIfam" id="TIGR03632">
    <property type="entry name" value="uS11_bact"/>
    <property type="match status" value="1"/>
</dbReference>
<dbReference type="PANTHER" id="PTHR11759">
    <property type="entry name" value="40S RIBOSOMAL PROTEIN S14/30S RIBOSOMAL PROTEIN S11"/>
    <property type="match status" value="1"/>
</dbReference>
<dbReference type="Pfam" id="PF00411">
    <property type="entry name" value="Ribosomal_S11"/>
    <property type="match status" value="1"/>
</dbReference>
<dbReference type="PIRSF" id="PIRSF002131">
    <property type="entry name" value="Ribosomal_S11"/>
    <property type="match status" value="1"/>
</dbReference>
<dbReference type="SUPFAM" id="SSF53137">
    <property type="entry name" value="Translational machinery components"/>
    <property type="match status" value="1"/>
</dbReference>
<dbReference type="PROSITE" id="PS00054">
    <property type="entry name" value="RIBOSOMAL_S11"/>
    <property type="match status" value="1"/>
</dbReference>